<keyword id="KW-0067">ATP-binding</keyword>
<keyword id="KW-0143">Chaperone</keyword>
<keyword id="KW-0963">Cytoplasm</keyword>
<keyword id="KW-0378">Hydrolase</keyword>
<keyword id="KW-0547">Nucleotide-binding</keyword>
<dbReference type="EC" id="3.6.1.-" evidence="1"/>
<dbReference type="EMBL" id="CU928160">
    <property type="protein sequence ID" value="CAR00724.1"/>
    <property type="molecule type" value="Genomic_DNA"/>
</dbReference>
<dbReference type="RefSeq" id="WP_001315921.1">
    <property type="nucleotide sequence ID" value="NC_011741.1"/>
</dbReference>
<dbReference type="SMR" id="B7M5A2"/>
<dbReference type="GeneID" id="75205464"/>
<dbReference type="KEGG" id="ecr:ECIAI1_3930"/>
<dbReference type="HOGENOM" id="CLU_018678_1_0_6"/>
<dbReference type="GO" id="GO:0005737">
    <property type="term" value="C:cytoplasm"/>
    <property type="evidence" value="ECO:0007669"/>
    <property type="project" value="UniProtKB-SubCell"/>
</dbReference>
<dbReference type="GO" id="GO:0005524">
    <property type="term" value="F:ATP binding"/>
    <property type="evidence" value="ECO:0007669"/>
    <property type="project" value="UniProtKB-KW"/>
</dbReference>
<dbReference type="GO" id="GO:0016887">
    <property type="term" value="F:ATP hydrolysis activity"/>
    <property type="evidence" value="ECO:0007669"/>
    <property type="project" value="UniProtKB-UniRule"/>
</dbReference>
<dbReference type="CDD" id="cd00009">
    <property type="entry name" value="AAA"/>
    <property type="match status" value="1"/>
</dbReference>
<dbReference type="FunFam" id="3.40.50.300:FF:000410">
    <property type="entry name" value="ATPase RavA"/>
    <property type="match status" value="1"/>
</dbReference>
<dbReference type="Gene3D" id="1.20.58.1510">
    <property type="match status" value="1"/>
</dbReference>
<dbReference type="Gene3D" id="2.40.128.430">
    <property type="match status" value="1"/>
</dbReference>
<dbReference type="Gene3D" id="3.40.50.300">
    <property type="entry name" value="P-loop containing nucleotide triphosphate hydrolases"/>
    <property type="match status" value="1"/>
</dbReference>
<dbReference type="HAMAP" id="MF_01625">
    <property type="entry name" value="ATPase_RavA"/>
    <property type="match status" value="1"/>
</dbReference>
<dbReference type="InterPro" id="IPR003593">
    <property type="entry name" value="AAA+_ATPase"/>
</dbReference>
<dbReference type="InterPro" id="IPR023671">
    <property type="entry name" value="ATPase_RavA"/>
</dbReference>
<dbReference type="InterPro" id="IPR022547">
    <property type="entry name" value="ATPase_RavA_C"/>
</dbReference>
<dbReference type="InterPro" id="IPR045427">
    <property type="entry name" value="MoxR"/>
</dbReference>
<dbReference type="InterPro" id="IPR027417">
    <property type="entry name" value="P-loop_NTPase"/>
</dbReference>
<dbReference type="InterPro" id="IPR041538">
    <property type="entry name" value="RavA-like_AAA_lid"/>
</dbReference>
<dbReference type="InterPro" id="IPR050513">
    <property type="entry name" value="RavA_ATPases"/>
</dbReference>
<dbReference type="InterPro" id="IPR046898">
    <property type="entry name" value="RavA_LARA_dom"/>
</dbReference>
<dbReference type="InterPro" id="IPR046932">
    <property type="entry name" value="RavA_LARA_sf"/>
</dbReference>
<dbReference type="NCBIfam" id="NF010054">
    <property type="entry name" value="PRK13531.1"/>
    <property type="match status" value="1"/>
</dbReference>
<dbReference type="PANTHER" id="PTHR32204">
    <property type="entry name" value="ATPASE RAVA"/>
    <property type="match status" value="1"/>
</dbReference>
<dbReference type="PANTHER" id="PTHR32204:SF0">
    <property type="entry name" value="ATPASE RAVA"/>
    <property type="match status" value="1"/>
</dbReference>
<dbReference type="Pfam" id="PF17868">
    <property type="entry name" value="AAA_lid_8"/>
    <property type="match status" value="1"/>
</dbReference>
<dbReference type="Pfam" id="PF12592">
    <property type="entry name" value="ATPase_RavA_C"/>
    <property type="match status" value="1"/>
</dbReference>
<dbReference type="Pfam" id="PF20030">
    <property type="entry name" value="bpMoxR"/>
    <property type="match status" value="1"/>
</dbReference>
<dbReference type="Pfam" id="PF20265">
    <property type="entry name" value="LARA_dom"/>
    <property type="match status" value="1"/>
</dbReference>
<dbReference type="SMART" id="SM00382">
    <property type="entry name" value="AAA"/>
    <property type="match status" value="1"/>
</dbReference>
<dbReference type="SUPFAM" id="SSF52540">
    <property type="entry name" value="P-loop containing nucleoside triphosphate hydrolases"/>
    <property type="match status" value="1"/>
</dbReference>
<name>RAVA_ECO8A</name>
<comment type="function">
    <text evidence="1">Component of the RavA-ViaA chaperone complex, which may act on the membrane to optimize the function of some of the respiratory chains. RavA functions as an ATPase.</text>
</comment>
<comment type="catalytic activity">
    <reaction evidence="1">
        <text>ATP + H2O = ADP + phosphate + H(+)</text>
        <dbReference type="Rhea" id="RHEA:13065"/>
        <dbReference type="ChEBI" id="CHEBI:15377"/>
        <dbReference type="ChEBI" id="CHEBI:15378"/>
        <dbReference type="ChEBI" id="CHEBI:30616"/>
        <dbReference type="ChEBI" id="CHEBI:43474"/>
        <dbReference type="ChEBI" id="CHEBI:456216"/>
    </reaction>
</comment>
<comment type="activity regulation">
    <text evidence="1">ATPase activity is stimulated by ViaA.</text>
</comment>
<comment type="subunit">
    <text evidence="1">Homohexamer. Interacts with ViaA.</text>
</comment>
<comment type="subcellular location">
    <subcellularLocation>
        <location evidence="1">Cytoplasm</location>
    </subcellularLocation>
</comment>
<comment type="similarity">
    <text evidence="1">Belongs to the RavA family.</text>
</comment>
<evidence type="ECO:0000255" key="1">
    <source>
        <dbReference type="HAMAP-Rule" id="MF_01625"/>
    </source>
</evidence>
<organism>
    <name type="scientific">Escherichia coli O8 (strain IAI1)</name>
    <dbReference type="NCBI Taxonomy" id="585034"/>
    <lineage>
        <taxon>Bacteria</taxon>
        <taxon>Pseudomonadati</taxon>
        <taxon>Pseudomonadota</taxon>
        <taxon>Gammaproteobacteria</taxon>
        <taxon>Enterobacterales</taxon>
        <taxon>Enterobacteriaceae</taxon>
        <taxon>Escherichia</taxon>
    </lineage>
</organism>
<feature type="chain" id="PRO_1000186127" description="Regulatory ATPase RavA">
    <location>
        <begin position="1"/>
        <end position="498"/>
    </location>
</feature>
<feature type="binding site" evidence="1">
    <location>
        <position position="23"/>
    </location>
    <ligand>
        <name>ADP</name>
        <dbReference type="ChEBI" id="CHEBI:456216"/>
    </ligand>
</feature>
<feature type="binding site" evidence="1">
    <location>
        <position position="49"/>
    </location>
    <ligand>
        <name>ADP</name>
        <dbReference type="ChEBI" id="CHEBI:456216"/>
    </ligand>
</feature>
<feature type="binding site" evidence="1">
    <location>
        <position position="50"/>
    </location>
    <ligand>
        <name>ADP</name>
        <dbReference type="ChEBI" id="CHEBI:456216"/>
    </ligand>
</feature>
<feature type="binding site" evidence="1">
    <location>
        <position position="51"/>
    </location>
    <ligand>
        <name>ADP</name>
        <dbReference type="ChEBI" id="CHEBI:456216"/>
    </ligand>
</feature>
<feature type="binding site" evidence="1">
    <location>
        <position position="52"/>
    </location>
    <ligand>
        <name>ADP</name>
        <dbReference type="ChEBI" id="CHEBI:456216"/>
    </ligand>
</feature>
<feature type="binding site" evidence="1">
    <location>
        <position position="53"/>
    </location>
    <ligand>
        <name>ADP</name>
        <dbReference type="ChEBI" id="CHEBI:456216"/>
    </ligand>
</feature>
<feature type="binding site" evidence="1">
    <location>
        <position position="54"/>
    </location>
    <ligand>
        <name>ADP</name>
        <dbReference type="ChEBI" id="CHEBI:456216"/>
    </ligand>
</feature>
<feature type="binding site" evidence="1">
    <location>
        <position position="196"/>
    </location>
    <ligand>
        <name>ADP</name>
        <dbReference type="ChEBI" id="CHEBI:456216"/>
    </ligand>
</feature>
<protein>
    <recommendedName>
        <fullName evidence="1">Regulatory ATPase RavA</fullName>
        <ecNumber evidence="1">3.6.1.-</ecNumber>
    </recommendedName>
    <alternativeName>
        <fullName evidence="1">Regulatory ATPase variant A</fullName>
    </alternativeName>
</protein>
<accession>B7M5A2</accession>
<proteinExistence type="inferred from homology"/>
<reference key="1">
    <citation type="journal article" date="2009" name="PLoS Genet.">
        <title>Organised genome dynamics in the Escherichia coli species results in highly diverse adaptive paths.</title>
        <authorList>
            <person name="Touchon M."/>
            <person name="Hoede C."/>
            <person name="Tenaillon O."/>
            <person name="Barbe V."/>
            <person name="Baeriswyl S."/>
            <person name="Bidet P."/>
            <person name="Bingen E."/>
            <person name="Bonacorsi S."/>
            <person name="Bouchier C."/>
            <person name="Bouvet O."/>
            <person name="Calteau A."/>
            <person name="Chiapello H."/>
            <person name="Clermont O."/>
            <person name="Cruveiller S."/>
            <person name="Danchin A."/>
            <person name="Diard M."/>
            <person name="Dossat C."/>
            <person name="Karoui M.E."/>
            <person name="Frapy E."/>
            <person name="Garry L."/>
            <person name="Ghigo J.M."/>
            <person name="Gilles A.M."/>
            <person name="Johnson J."/>
            <person name="Le Bouguenec C."/>
            <person name="Lescat M."/>
            <person name="Mangenot S."/>
            <person name="Martinez-Jehanne V."/>
            <person name="Matic I."/>
            <person name="Nassif X."/>
            <person name="Oztas S."/>
            <person name="Petit M.A."/>
            <person name="Pichon C."/>
            <person name="Rouy Z."/>
            <person name="Ruf C.S."/>
            <person name="Schneider D."/>
            <person name="Tourret J."/>
            <person name="Vacherie B."/>
            <person name="Vallenet D."/>
            <person name="Medigue C."/>
            <person name="Rocha E.P.C."/>
            <person name="Denamur E."/>
        </authorList>
    </citation>
    <scope>NUCLEOTIDE SEQUENCE [LARGE SCALE GENOMIC DNA]</scope>
    <source>
        <strain>IAI1</strain>
    </source>
</reference>
<sequence length="498" mass="56416">MAHPHLLAERISRLSSSLEKGLYERSHAIRLCLLAALSGESVFLLGPPGIAKSLIARRLKFAFQNARAFEYLMTRFSTPEEVFGPLSIQALKDEGRYERLTSGYLPEAEIVFLDEIWKAGPAILNTLLTAINERQFRNGAHVEKIPMRLLVAASNELPEADSSLEALYDRMLIRLWLDKVQDKANFRSMLTSQQDENDNPVPDALQVTDEEYERWQKEIGEITLPDHVFELIFMLRQQLDKLPDAPYVSDRRWKKAIRLLQASAFFSGRSAVAPVDLILLKDCLWYDAQSLNLIQQQIDVLMTGHAWQQQGMLTRLGAIVQRHLQLQQQQSDKTALTVIRLGGIFSRRQQYQLPVNVTASTLTLLLQKPLKLHDMEVVHISFERNALEQWLSKGGEIRGKLNGIGFAQKLNLEVDSAQHLVVRDVSLQGSTLALPGSSAEGLPGEIKQQLEELESDWRKQHALFSEQQKCLFIPGDWLGRIEASLQDVGAQIRQAQQC</sequence>
<gene>
    <name evidence="1" type="primary">ravA</name>
    <name type="ordered locus">ECIAI1_3930</name>
</gene>